<accession>P9WIP0</accession>
<accession>L0T8A1</accession>
<accession>O08224</accession>
<accession>P0A5Q2</accession>
<accession>P97175</accession>
<proteinExistence type="inferred from homology"/>
<protein>
    <recommendedName>
        <fullName>Immunogenic protein MPT63</fullName>
    </recommendedName>
    <alternativeName>
        <fullName>16 kDa immunoprotective extracellular protein</fullName>
    </alternativeName>
    <alternativeName>
        <fullName>Antigen MPT63</fullName>
    </alternativeName>
</protein>
<name>MP63_MYCTO</name>
<evidence type="ECO:0000250" key="1"/>
<reference key="1">
    <citation type="journal article" date="2002" name="J. Bacteriol.">
        <title>Whole-genome comparison of Mycobacterium tuberculosis clinical and laboratory strains.</title>
        <authorList>
            <person name="Fleischmann R.D."/>
            <person name="Alland D."/>
            <person name="Eisen J.A."/>
            <person name="Carpenter L."/>
            <person name="White O."/>
            <person name="Peterson J.D."/>
            <person name="DeBoy R.T."/>
            <person name="Dodson R.J."/>
            <person name="Gwinn M.L."/>
            <person name="Haft D.H."/>
            <person name="Hickey E.K."/>
            <person name="Kolonay J.F."/>
            <person name="Nelson W.C."/>
            <person name="Umayam L.A."/>
            <person name="Ermolaeva M.D."/>
            <person name="Salzberg S.L."/>
            <person name="Delcher A."/>
            <person name="Utterback T.R."/>
            <person name="Weidman J.F."/>
            <person name="Khouri H.M."/>
            <person name="Gill J."/>
            <person name="Mikula A."/>
            <person name="Bishai W."/>
            <person name="Jacobs W.R. Jr."/>
            <person name="Venter J.C."/>
            <person name="Fraser C.M."/>
        </authorList>
    </citation>
    <scope>NUCLEOTIDE SEQUENCE [LARGE SCALE GENOMIC DNA]</scope>
    <source>
        <strain>CDC 1551 / Oshkosh</strain>
    </source>
</reference>
<dbReference type="EMBL" id="AE000516">
    <property type="protein sequence ID" value="AAK46249.1"/>
    <property type="molecule type" value="Genomic_DNA"/>
</dbReference>
<dbReference type="PIR" id="B70635">
    <property type="entry name" value="B70635"/>
</dbReference>
<dbReference type="RefSeq" id="WP_003409684.1">
    <property type="nucleotide sequence ID" value="NZ_KK341227.1"/>
</dbReference>
<dbReference type="SMR" id="P9WIP0"/>
<dbReference type="KEGG" id="mtc:MT1977"/>
<dbReference type="PATRIC" id="fig|83331.31.peg.2128"/>
<dbReference type="HOGENOM" id="CLU_067309_1_0_11"/>
<dbReference type="Proteomes" id="UP000001020">
    <property type="component" value="Chromosome"/>
</dbReference>
<dbReference type="GO" id="GO:0005615">
    <property type="term" value="C:extracellular space"/>
    <property type="evidence" value="ECO:0007669"/>
    <property type="project" value="InterPro"/>
</dbReference>
<dbReference type="FunFam" id="2.60.40.1240:FF:000001">
    <property type="entry name" value="Immunogenic protein MPT63"/>
    <property type="match status" value="1"/>
</dbReference>
<dbReference type="Gene3D" id="2.60.40.1240">
    <property type="match status" value="1"/>
</dbReference>
<dbReference type="InterPro" id="IPR029050">
    <property type="entry name" value="Immunoprotect_excell_Ig-like"/>
</dbReference>
<dbReference type="InterPro" id="IPR015250">
    <property type="entry name" value="MPT63-like"/>
</dbReference>
<dbReference type="Pfam" id="PF09167">
    <property type="entry name" value="DUF1942"/>
    <property type="match status" value="1"/>
</dbReference>
<dbReference type="SUPFAM" id="SSF81982">
    <property type="entry name" value="Antigen MPT63/MPB63 (immunoprotective extracellular protein)"/>
    <property type="match status" value="1"/>
</dbReference>
<comment type="subcellular location">
    <subcellularLocation>
        <location evidence="1">Secreted</location>
    </subcellularLocation>
</comment>
<feature type="signal peptide" evidence="1">
    <location>
        <begin position="1"/>
        <end position="29"/>
    </location>
</feature>
<feature type="chain" id="PRO_0000427971" description="Immunogenic protein MPT63">
    <location>
        <begin position="30"/>
        <end position="159"/>
    </location>
</feature>
<organism>
    <name type="scientific">Mycobacterium tuberculosis (strain CDC 1551 / Oshkosh)</name>
    <dbReference type="NCBI Taxonomy" id="83331"/>
    <lineage>
        <taxon>Bacteria</taxon>
        <taxon>Bacillati</taxon>
        <taxon>Actinomycetota</taxon>
        <taxon>Actinomycetes</taxon>
        <taxon>Mycobacteriales</taxon>
        <taxon>Mycobacteriaceae</taxon>
        <taxon>Mycobacterium</taxon>
        <taxon>Mycobacterium tuberculosis complex</taxon>
    </lineage>
</organism>
<gene>
    <name type="primary">mpt63</name>
    <name type="ordered locus">MT1977</name>
</gene>
<keyword id="KW-1185">Reference proteome</keyword>
<keyword id="KW-0964">Secreted</keyword>
<keyword id="KW-0732">Signal</keyword>
<sequence length="159" mass="16514">MKLTTMIKTAVAVVAMAAIATFAAPVALAAYPITGKLGSELTMTDTVGQVVLGWKVSDLKSSTAVIPGYPVAGQVWEATATVNAIRGSVTPAVSQFNARTADGINYRVLWQAAGPDTISGATIPQGEQSTGKIYFDVTGPSPTIVAMNNGMEDLLIWEP</sequence>